<accession>Q02YJ4</accession>
<dbReference type="EC" id="4.1.1.23" evidence="1"/>
<dbReference type="EMBL" id="CP000425">
    <property type="protein sequence ID" value="ABJ72978.1"/>
    <property type="molecule type" value="Genomic_DNA"/>
</dbReference>
<dbReference type="RefSeq" id="WP_011676339.1">
    <property type="nucleotide sequence ID" value="NC_008527.1"/>
</dbReference>
<dbReference type="SMR" id="Q02YJ4"/>
<dbReference type="GeneID" id="61109622"/>
<dbReference type="KEGG" id="llc:LACR_1468"/>
<dbReference type="HOGENOM" id="CLU_067069_1_1_9"/>
<dbReference type="UniPathway" id="UPA00070">
    <property type="reaction ID" value="UER00120"/>
</dbReference>
<dbReference type="Proteomes" id="UP000000240">
    <property type="component" value="Chromosome"/>
</dbReference>
<dbReference type="GO" id="GO:0005829">
    <property type="term" value="C:cytosol"/>
    <property type="evidence" value="ECO:0007669"/>
    <property type="project" value="TreeGrafter"/>
</dbReference>
<dbReference type="GO" id="GO:0004590">
    <property type="term" value="F:orotidine-5'-phosphate decarboxylase activity"/>
    <property type="evidence" value="ECO:0007669"/>
    <property type="project" value="UniProtKB-UniRule"/>
</dbReference>
<dbReference type="GO" id="GO:0006207">
    <property type="term" value="P:'de novo' pyrimidine nucleobase biosynthetic process"/>
    <property type="evidence" value="ECO:0007669"/>
    <property type="project" value="InterPro"/>
</dbReference>
<dbReference type="GO" id="GO:0044205">
    <property type="term" value="P:'de novo' UMP biosynthetic process"/>
    <property type="evidence" value="ECO:0007669"/>
    <property type="project" value="UniProtKB-UniRule"/>
</dbReference>
<dbReference type="CDD" id="cd04725">
    <property type="entry name" value="OMP_decarboxylase_like"/>
    <property type="match status" value="1"/>
</dbReference>
<dbReference type="FunFam" id="3.20.20.70:FF:000015">
    <property type="entry name" value="Orotidine 5'-phosphate decarboxylase"/>
    <property type="match status" value="1"/>
</dbReference>
<dbReference type="Gene3D" id="3.20.20.70">
    <property type="entry name" value="Aldolase class I"/>
    <property type="match status" value="1"/>
</dbReference>
<dbReference type="HAMAP" id="MF_01200_B">
    <property type="entry name" value="OMPdecase_type1_B"/>
    <property type="match status" value="1"/>
</dbReference>
<dbReference type="InterPro" id="IPR013785">
    <property type="entry name" value="Aldolase_TIM"/>
</dbReference>
<dbReference type="InterPro" id="IPR014732">
    <property type="entry name" value="OMPdecase"/>
</dbReference>
<dbReference type="InterPro" id="IPR018089">
    <property type="entry name" value="OMPdecase_AS"/>
</dbReference>
<dbReference type="InterPro" id="IPR047596">
    <property type="entry name" value="OMPdecase_bac"/>
</dbReference>
<dbReference type="InterPro" id="IPR001754">
    <property type="entry name" value="OMPdeCOase_dom"/>
</dbReference>
<dbReference type="InterPro" id="IPR011060">
    <property type="entry name" value="RibuloseP-bd_barrel"/>
</dbReference>
<dbReference type="NCBIfam" id="NF001273">
    <property type="entry name" value="PRK00230.1"/>
    <property type="match status" value="1"/>
</dbReference>
<dbReference type="NCBIfam" id="TIGR01740">
    <property type="entry name" value="pyrF"/>
    <property type="match status" value="1"/>
</dbReference>
<dbReference type="PANTHER" id="PTHR32119">
    <property type="entry name" value="OROTIDINE 5'-PHOSPHATE DECARBOXYLASE"/>
    <property type="match status" value="1"/>
</dbReference>
<dbReference type="PANTHER" id="PTHR32119:SF2">
    <property type="entry name" value="OROTIDINE 5'-PHOSPHATE DECARBOXYLASE"/>
    <property type="match status" value="1"/>
</dbReference>
<dbReference type="Pfam" id="PF00215">
    <property type="entry name" value="OMPdecase"/>
    <property type="match status" value="1"/>
</dbReference>
<dbReference type="SMART" id="SM00934">
    <property type="entry name" value="OMPdecase"/>
    <property type="match status" value="1"/>
</dbReference>
<dbReference type="SUPFAM" id="SSF51366">
    <property type="entry name" value="Ribulose-phoshate binding barrel"/>
    <property type="match status" value="1"/>
</dbReference>
<dbReference type="PROSITE" id="PS00156">
    <property type="entry name" value="OMPDECASE"/>
    <property type="match status" value="1"/>
</dbReference>
<feature type="chain" id="PRO_1000065915" description="Orotidine 5'-phosphate decarboxylase">
    <location>
        <begin position="1"/>
        <end position="237"/>
    </location>
</feature>
<feature type="active site" description="Proton donor" evidence="1">
    <location>
        <position position="63"/>
    </location>
</feature>
<feature type="binding site" evidence="1">
    <location>
        <position position="11"/>
    </location>
    <ligand>
        <name>substrate</name>
    </ligand>
</feature>
<feature type="binding site" evidence="1">
    <location>
        <position position="34"/>
    </location>
    <ligand>
        <name>substrate</name>
    </ligand>
</feature>
<feature type="binding site" evidence="1">
    <location>
        <begin position="61"/>
        <end position="70"/>
    </location>
    <ligand>
        <name>substrate</name>
    </ligand>
</feature>
<feature type="binding site" evidence="1">
    <location>
        <position position="124"/>
    </location>
    <ligand>
        <name>substrate</name>
    </ligand>
</feature>
<feature type="binding site" evidence="1">
    <location>
        <position position="186"/>
    </location>
    <ligand>
        <name>substrate</name>
    </ligand>
</feature>
<feature type="binding site" evidence="1">
    <location>
        <position position="195"/>
    </location>
    <ligand>
        <name>substrate</name>
    </ligand>
</feature>
<feature type="binding site" evidence="1">
    <location>
        <position position="215"/>
    </location>
    <ligand>
        <name>substrate</name>
    </ligand>
</feature>
<feature type="binding site" evidence="1">
    <location>
        <position position="216"/>
    </location>
    <ligand>
        <name>substrate</name>
    </ligand>
</feature>
<comment type="function">
    <text evidence="1">Catalyzes the decarboxylation of orotidine 5'-monophosphate (OMP) to uridine 5'-monophosphate (UMP).</text>
</comment>
<comment type="catalytic activity">
    <reaction evidence="1">
        <text>orotidine 5'-phosphate + H(+) = UMP + CO2</text>
        <dbReference type="Rhea" id="RHEA:11596"/>
        <dbReference type="ChEBI" id="CHEBI:15378"/>
        <dbReference type="ChEBI" id="CHEBI:16526"/>
        <dbReference type="ChEBI" id="CHEBI:57538"/>
        <dbReference type="ChEBI" id="CHEBI:57865"/>
        <dbReference type="EC" id="4.1.1.23"/>
    </reaction>
</comment>
<comment type="pathway">
    <text evidence="1">Pyrimidine metabolism; UMP biosynthesis via de novo pathway; UMP from orotate: step 2/2.</text>
</comment>
<comment type="subunit">
    <text evidence="1">Homodimer.</text>
</comment>
<comment type="similarity">
    <text evidence="1">Belongs to the OMP decarboxylase family. Type 1 subfamily.</text>
</comment>
<evidence type="ECO:0000255" key="1">
    <source>
        <dbReference type="HAMAP-Rule" id="MF_01200"/>
    </source>
</evidence>
<protein>
    <recommendedName>
        <fullName evidence="1">Orotidine 5'-phosphate decarboxylase</fullName>
        <ecNumber evidence="1">4.1.1.23</ecNumber>
    </recommendedName>
    <alternativeName>
        <fullName evidence="1">OMP decarboxylase</fullName>
        <shortName evidence="1">OMPDCase</shortName>
        <shortName evidence="1">OMPdecase</shortName>
    </alternativeName>
</protein>
<proteinExistence type="inferred from homology"/>
<name>PYRF_LACLS</name>
<keyword id="KW-0210">Decarboxylase</keyword>
<keyword id="KW-0456">Lyase</keyword>
<keyword id="KW-0665">Pyrimidine biosynthesis</keyword>
<sequence length="237" mass="26157">MQENRPVIALDFPEFSDVKDFLEKFDPSEKLYIKLGMELFYTAGPQVVYYVKSLGHSVFLDLKLHDIPNTVESSMRVLARLGVDMVNVHAAGGVEMMVAAKRGLEAGTPTGRQRPKLIAVTQLTSTSEEIMQNDQKIMTSLEESVINYAQKTAQAGLDGVVCSAHEVEKIKAATSKEFICLTPGIRPEGASKGDQKRVMTPKEARTIGSDYIVVGRPITQAKDPVSAYHAIKEEWNQ</sequence>
<gene>
    <name evidence="1" type="primary">pyrF</name>
    <name type="ordered locus">LACR_1468</name>
</gene>
<reference key="1">
    <citation type="journal article" date="2006" name="Proc. Natl. Acad. Sci. U.S.A.">
        <title>Comparative genomics of the lactic acid bacteria.</title>
        <authorList>
            <person name="Makarova K.S."/>
            <person name="Slesarev A."/>
            <person name="Wolf Y.I."/>
            <person name="Sorokin A."/>
            <person name="Mirkin B."/>
            <person name="Koonin E.V."/>
            <person name="Pavlov A."/>
            <person name="Pavlova N."/>
            <person name="Karamychev V."/>
            <person name="Polouchine N."/>
            <person name="Shakhova V."/>
            <person name="Grigoriev I."/>
            <person name="Lou Y."/>
            <person name="Rohksar D."/>
            <person name="Lucas S."/>
            <person name="Huang K."/>
            <person name="Goodstein D.M."/>
            <person name="Hawkins T."/>
            <person name="Plengvidhya V."/>
            <person name="Welker D."/>
            <person name="Hughes J."/>
            <person name="Goh Y."/>
            <person name="Benson A."/>
            <person name="Baldwin K."/>
            <person name="Lee J.-H."/>
            <person name="Diaz-Muniz I."/>
            <person name="Dosti B."/>
            <person name="Smeianov V."/>
            <person name="Wechter W."/>
            <person name="Barabote R."/>
            <person name="Lorca G."/>
            <person name="Altermann E."/>
            <person name="Barrangou R."/>
            <person name="Ganesan B."/>
            <person name="Xie Y."/>
            <person name="Rawsthorne H."/>
            <person name="Tamir D."/>
            <person name="Parker C."/>
            <person name="Breidt F."/>
            <person name="Broadbent J.R."/>
            <person name="Hutkins R."/>
            <person name="O'Sullivan D."/>
            <person name="Steele J."/>
            <person name="Unlu G."/>
            <person name="Saier M.H. Jr."/>
            <person name="Klaenhammer T."/>
            <person name="Richardson P."/>
            <person name="Kozyavkin S."/>
            <person name="Weimer B.C."/>
            <person name="Mills D.A."/>
        </authorList>
    </citation>
    <scope>NUCLEOTIDE SEQUENCE [LARGE SCALE GENOMIC DNA]</scope>
    <source>
        <strain>SK11</strain>
    </source>
</reference>
<organism>
    <name type="scientific">Lactococcus lactis subsp. cremoris (strain SK11)</name>
    <dbReference type="NCBI Taxonomy" id="272622"/>
    <lineage>
        <taxon>Bacteria</taxon>
        <taxon>Bacillati</taxon>
        <taxon>Bacillota</taxon>
        <taxon>Bacilli</taxon>
        <taxon>Lactobacillales</taxon>
        <taxon>Streptococcaceae</taxon>
        <taxon>Lactococcus</taxon>
        <taxon>Lactococcus cremoris subsp. cremoris</taxon>
    </lineage>
</organism>